<sequence>MLDPNMLRNELDAVAEKLARRGFKLDVEVLRQQEERRKVLQVETESLQAERNSRSKQIGAAKARGEDIEPLRLEVNALGEKLDAAKAELDKLQNEIRDLALSIPNLPDDSVPVGKNENDNIEVSRWGEPRKYDFDVKDHVSLGEMAGGLDFAAAVKLTGARFVVMKGQIARMHRALSQFMLDLHTEKHGYLEAYVPYLVNHATLYGTGQLPKFGEDLFHTKPLAEESDNSNYALIPTAEVPLTNLVRDEILEEDSLPLKLTAHTPCFRSEAGSYGRDTRGLIRMHQFDKVEMVQITRPEDSMAALEELTGHAEKVLQLLELPYRKVLLCTGDMGFGSSKTYDLEVWLPAQDTYREISSCSNMWDFQARRMQARYRNKTDRKTRLVHTLNGSGLAVGRTLVAVLENYQQADGRIQVPDVLRPYMGGLEYIG</sequence>
<reference key="1">
    <citation type="submission" date="2008-04" db="EMBL/GenBank/DDBJ databases">
        <title>Complete sequence of Yersinia pseudotuberculosis PB1/+.</title>
        <authorList>
            <person name="Copeland A."/>
            <person name="Lucas S."/>
            <person name="Lapidus A."/>
            <person name="Glavina del Rio T."/>
            <person name="Dalin E."/>
            <person name="Tice H."/>
            <person name="Bruce D."/>
            <person name="Goodwin L."/>
            <person name="Pitluck S."/>
            <person name="Munk A.C."/>
            <person name="Brettin T."/>
            <person name="Detter J.C."/>
            <person name="Han C."/>
            <person name="Tapia R."/>
            <person name="Schmutz J."/>
            <person name="Larimer F."/>
            <person name="Land M."/>
            <person name="Hauser L."/>
            <person name="Challacombe J.F."/>
            <person name="Green L."/>
            <person name="Lindler L.E."/>
            <person name="Nikolich M.P."/>
            <person name="Richardson P."/>
        </authorList>
    </citation>
    <scope>NUCLEOTIDE SEQUENCE [LARGE SCALE GENOMIC DNA]</scope>
    <source>
        <strain>PB1/+</strain>
    </source>
</reference>
<protein>
    <recommendedName>
        <fullName evidence="1">Serine--tRNA ligase</fullName>
        <ecNumber evidence="1">6.1.1.11</ecNumber>
    </recommendedName>
    <alternativeName>
        <fullName evidence="1">Seryl-tRNA synthetase</fullName>
        <shortName evidence="1">SerRS</shortName>
    </alternativeName>
    <alternativeName>
        <fullName evidence="1">Seryl-tRNA(Ser/Sec) synthetase</fullName>
    </alternativeName>
</protein>
<evidence type="ECO:0000255" key="1">
    <source>
        <dbReference type="HAMAP-Rule" id="MF_00176"/>
    </source>
</evidence>
<gene>
    <name evidence="1" type="primary">serS</name>
    <name type="ordered locus">YPTS_1505</name>
</gene>
<accession>B2KA12</accession>
<name>SYS_YERPB</name>
<keyword id="KW-0030">Aminoacyl-tRNA synthetase</keyword>
<keyword id="KW-0067">ATP-binding</keyword>
<keyword id="KW-0963">Cytoplasm</keyword>
<keyword id="KW-0436">Ligase</keyword>
<keyword id="KW-0547">Nucleotide-binding</keyword>
<keyword id="KW-0648">Protein biosynthesis</keyword>
<comment type="function">
    <text evidence="1">Catalyzes the attachment of serine to tRNA(Ser). Is also able to aminoacylate tRNA(Sec) with serine, to form the misacylated tRNA L-seryl-tRNA(Sec), which will be further converted into selenocysteinyl-tRNA(Sec).</text>
</comment>
<comment type="catalytic activity">
    <reaction evidence="1">
        <text>tRNA(Ser) + L-serine + ATP = L-seryl-tRNA(Ser) + AMP + diphosphate + H(+)</text>
        <dbReference type="Rhea" id="RHEA:12292"/>
        <dbReference type="Rhea" id="RHEA-COMP:9669"/>
        <dbReference type="Rhea" id="RHEA-COMP:9703"/>
        <dbReference type="ChEBI" id="CHEBI:15378"/>
        <dbReference type="ChEBI" id="CHEBI:30616"/>
        <dbReference type="ChEBI" id="CHEBI:33019"/>
        <dbReference type="ChEBI" id="CHEBI:33384"/>
        <dbReference type="ChEBI" id="CHEBI:78442"/>
        <dbReference type="ChEBI" id="CHEBI:78533"/>
        <dbReference type="ChEBI" id="CHEBI:456215"/>
        <dbReference type="EC" id="6.1.1.11"/>
    </reaction>
</comment>
<comment type="catalytic activity">
    <reaction evidence="1">
        <text>tRNA(Sec) + L-serine + ATP = L-seryl-tRNA(Sec) + AMP + diphosphate + H(+)</text>
        <dbReference type="Rhea" id="RHEA:42580"/>
        <dbReference type="Rhea" id="RHEA-COMP:9742"/>
        <dbReference type="Rhea" id="RHEA-COMP:10128"/>
        <dbReference type="ChEBI" id="CHEBI:15378"/>
        <dbReference type="ChEBI" id="CHEBI:30616"/>
        <dbReference type="ChEBI" id="CHEBI:33019"/>
        <dbReference type="ChEBI" id="CHEBI:33384"/>
        <dbReference type="ChEBI" id="CHEBI:78442"/>
        <dbReference type="ChEBI" id="CHEBI:78533"/>
        <dbReference type="ChEBI" id="CHEBI:456215"/>
        <dbReference type="EC" id="6.1.1.11"/>
    </reaction>
</comment>
<comment type="pathway">
    <text evidence="1">Aminoacyl-tRNA biosynthesis; selenocysteinyl-tRNA(Sec) biosynthesis; L-seryl-tRNA(Sec) from L-serine and tRNA(Sec): step 1/1.</text>
</comment>
<comment type="subunit">
    <text evidence="1">Homodimer. The tRNA molecule binds across the dimer.</text>
</comment>
<comment type="subcellular location">
    <subcellularLocation>
        <location evidence="1">Cytoplasm</location>
    </subcellularLocation>
</comment>
<comment type="domain">
    <text evidence="1">Consists of two distinct domains, a catalytic core and a N-terminal extension that is involved in tRNA binding.</text>
</comment>
<comment type="similarity">
    <text evidence="1">Belongs to the class-II aminoacyl-tRNA synthetase family. Type-1 seryl-tRNA synthetase subfamily.</text>
</comment>
<proteinExistence type="inferred from homology"/>
<organism>
    <name type="scientific">Yersinia pseudotuberculosis serotype IB (strain PB1/+)</name>
    <dbReference type="NCBI Taxonomy" id="502801"/>
    <lineage>
        <taxon>Bacteria</taxon>
        <taxon>Pseudomonadati</taxon>
        <taxon>Pseudomonadota</taxon>
        <taxon>Gammaproteobacteria</taxon>
        <taxon>Enterobacterales</taxon>
        <taxon>Yersiniaceae</taxon>
        <taxon>Yersinia</taxon>
    </lineage>
</organism>
<dbReference type="EC" id="6.1.1.11" evidence="1"/>
<dbReference type="EMBL" id="CP001048">
    <property type="protein sequence ID" value="ACC88477.1"/>
    <property type="molecule type" value="Genomic_DNA"/>
</dbReference>
<dbReference type="RefSeq" id="WP_002211336.1">
    <property type="nucleotide sequence ID" value="NZ_CP009780.1"/>
</dbReference>
<dbReference type="SMR" id="B2KA12"/>
<dbReference type="GeneID" id="57977175"/>
<dbReference type="KEGG" id="ypb:YPTS_1505"/>
<dbReference type="PATRIC" id="fig|502801.10.peg.869"/>
<dbReference type="UniPathway" id="UPA00906">
    <property type="reaction ID" value="UER00895"/>
</dbReference>
<dbReference type="GO" id="GO:0005737">
    <property type="term" value="C:cytoplasm"/>
    <property type="evidence" value="ECO:0007669"/>
    <property type="project" value="UniProtKB-SubCell"/>
</dbReference>
<dbReference type="GO" id="GO:0005524">
    <property type="term" value="F:ATP binding"/>
    <property type="evidence" value="ECO:0007669"/>
    <property type="project" value="UniProtKB-UniRule"/>
</dbReference>
<dbReference type="GO" id="GO:0004828">
    <property type="term" value="F:serine-tRNA ligase activity"/>
    <property type="evidence" value="ECO:0007669"/>
    <property type="project" value="UniProtKB-UniRule"/>
</dbReference>
<dbReference type="GO" id="GO:0016260">
    <property type="term" value="P:selenocysteine biosynthetic process"/>
    <property type="evidence" value="ECO:0007669"/>
    <property type="project" value="UniProtKB-UniRule"/>
</dbReference>
<dbReference type="GO" id="GO:0006434">
    <property type="term" value="P:seryl-tRNA aminoacylation"/>
    <property type="evidence" value="ECO:0007669"/>
    <property type="project" value="UniProtKB-UniRule"/>
</dbReference>
<dbReference type="CDD" id="cd00770">
    <property type="entry name" value="SerRS_core"/>
    <property type="match status" value="1"/>
</dbReference>
<dbReference type="FunFam" id="1.10.287.40:FF:000001">
    <property type="entry name" value="Serine--tRNA ligase"/>
    <property type="match status" value="1"/>
</dbReference>
<dbReference type="FunFam" id="3.30.930.10:FF:000018">
    <property type="entry name" value="Serine--tRNA ligase"/>
    <property type="match status" value="1"/>
</dbReference>
<dbReference type="Gene3D" id="3.30.930.10">
    <property type="entry name" value="Bira Bifunctional Protein, Domain 2"/>
    <property type="match status" value="1"/>
</dbReference>
<dbReference type="Gene3D" id="1.10.287.40">
    <property type="entry name" value="Serine-tRNA synthetase, tRNA binding domain"/>
    <property type="match status" value="1"/>
</dbReference>
<dbReference type="HAMAP" id="MF_00176">
    <property type="entry name" value="Ser_tRNA_synth_type1"/>
    <property type="match status" value="1"/>
</dbReference>
<dbReference type="InterPro" id="IPR002314">
    <property type="entry name" value="aa-tRNA-synt_IIb"/>
</dbReference>
<dbReference type="InterPro" id="IPR006195">
    <property type="entry name" value="aa-tRNA-synth_II"/>
</dbReference>
<dbReference type="InterPro" id="IPR045864">
    <property type="entry name" value="aa-tRNA-synth_II/BPL/LPL"/>
</dbReference>
<dbReference type="InterPro" id="IPR002317">
    <property type="entry name" value="Ser-tRNA-ligase_type_1"/>
</dbReference>
<dbReference type="InterPro" id="IPR015866">
    <property type="entry name" value="Ser-tRNA-synth_1_N"/>
</dbReference>
<dbReference type="InterPro" id="IPR042103">
    <property type="entry name" value="SerRS_1_N_sf"/>
</dbReference>
<dbReference type="InterPro" id="IPR033729">
    <property type="entry name" value="SerRS_core"/>
</dbReference>
<dbReference type="InterPro" id="IPR010978">
    <property type="entry name" value="tRNA-bd_arm"/>
</dbReference>
<dbReference type="NCBIfam" id="TIGR00414">
    <property type="entry name" value="serS"/>
    <property type="match status" value="1"/>
</dbReference>
<dbReference type="PANTHER" id="PTHR43697:SF1">
    <property type="entry name" value="SERINE--TRNA LIGASE"/>
    <property type="match status" value="1"/>
</dbReference>
<dbReference type="PANTHER" id="PTHR43697">
    <property type="entry name" value="SERYL-TRNA SYNTHETASE"/>
    <property type="match status" value="1"/>
</dbReference>
<dbReference type="Pfam" id="PF02403">
    <property type="entry name" value="Seryl_tRNA_N"/>
    <property type="match status" value="1"/>
</dbReference>
<dbReference type="Pfam" id="PF00587">
    <property type="entry name" value="tRNA-synt_2b"/>
    <property type="match status" value="1"/>
</dbReference>
<dbReference type="PIRSF" id="PIRSF001529">
    <property type="entry name" value="Ser-tRNA-synth_IIa"/>
    <property type="match status" value="1"/>
</dbReference>
<dbReference type="PRINTS" id="PR00981">
    <property type="entry name" value="TRNASYNTHSER"/>
</dbReference>
<dbReference type="SUPFAM" id="SSF55681">
    <property type="entry name" value="Class II aaRS and biotin synthetases"/>
    <property type="match status" value="1"/>
</dbReference>
<dbReference type="SUPFAM" id="SSF46589">
    <property type="entry name" value="tRNA-binding arm"/>
    <property type="match status" value="1"/>
</dbReference>
<dbReference type="PROSITE" id="PS50862">
    <property type="entry name" value="AA_TRNA_LIGASE_II"/>
    <property type="match status" value="1"/>
</dbReference>
<feature type="chain" id="PRO_1000098150" description="Serine--tRNA ligase">
    <location>
        <begin position="1"/>
        <end position="430"/>
    </location>
</feature>
<feature type="binding site" evidence="1">
    <location>
        <begin position="237"/>
        <end position="239"/>
    </location>
    <ligand>
        <name>L-serine</name>
        <dbReference type="ChEBI" id="CHEBI:33384"/>
    </ligand>
</feature>
<feature type="binding site" evidence="1">
    <location>
        <begin position="268"/>
        <end position="270"/>
    </location>
    <ligand>
        <name>ATP</name>
        <dbReference type="ChEBI" id="CHEBI:30616"/>
    </ligand>
</feature>
<feature type="binding site" evidence="1">
    <location>
        <position position="291"/>
    </location>
    <ligand>
        <name>L-serine</name>
        <dbReference type="ChEBI" id="CHEBI:33384"/>
    </ligand>
</feature>
<feature type="binding site" evidence="1">
    <location>
        <begin position="355"/>
        <end position="358"/>
    </location>
    <ligand>
        <name>ATP</name>
        <dbReference type="ChEBI" id="CHEBI:30616"/>
    </ligand>
</feature>
<feature type="binding site" evidence="1">
    <location>
        <position position="391"/>
    </location>
    <ligand>
        <name>L-serine</name>
        <dbReference type="ChEBI" id="CHEBI:33384"/>
    </ligand>
</feature>